<reference key="1">
    <citation type="submission" date="2009-07" db="EMBL/GenBank/DDBJ databases">
        <title>Complete sequence of Geobacter sp. M21.</title>
        <authorList>
            <consortium name="US DOE Joint Genome Institute"/>
            <person name="Lucas S."/>
            <person name="Copeland A."/>
            <person name="Lapidus A."/>
            <person name="Glavina del Rio T."/>
            <person name="Dalin E."/>
            <person name="Tice H."/>
            <person name="Bruce D."/>
            <person name="Goodwin L."/>
            <person name="Pitluck S."/>
            <person name="Saunders E."/>
            <person name="Brettin T."/>
            <person name="Detter J.C."/>
            <person name="Han C."/>
            <person name="Larimer F."/>
            <person name="Land M."/>
            <person name="Hauser L."/>
            <person name="Kyrpides N."/>
            <person name="Ovchinnikova G."/>
            <person name="Lovley D."/>
        </authorList>
    </citation>
    <scope>NUCLEOTIDE SEQUENCE [LARGE SCALE GENOMIC DNA]</scope>
    <source>
        <strain>M21</strain>
    </source>
</reference>
<keyword id="KW-0028">Amino-acid biosynthesis</keyword>
<keyword id="KW-0057">Aromatic amino acid biosynthesis</keyword>
<keyword id="KW-0521">NADP</keyword>
<keyword id="KW-0560">Oxidoreductase</keyword>
<evidence type="ECO:0000255" key="1">
    <source>
        <dbReference type="HAMAP-Rule" id="MF_00222"/>
    </source>
</evidence>
<organism>
    <name type="scientific">Geobacter sp. (strain M21)</name>
    <dbReference type="NCBI Taxonomy" id="443144"/>
    <lineage>
        <taxon>Bacteria</taxon>
        <taxon>Pseudomonadati</taxon>
        <taxon>Thermodesulfobacteriota</taxon>
        <taxon>Desulfuromonadia</taxon>
        <taxon>Geobacterales</taxon>
        <taxon>Geobacteraceae</taxon>
        <taxon>Geobacter</taxon>
    </lineage>
</organism>
<gene>
    <name evidence="1" type="primary">aroE</name>
    <name type="ordered locus">GM21_1630</name>
</gene>
<protein>
    <recommendedName>
        <fullName evidence="1">Shikimate dehydrogenase (NADP(+))</fullName>
        <shortName evidence="1">SDH</shortName>
        <ecNumber evidence="1">1.1.1.25</ecNumber>
    </recommendedName>
</protein>
<dbReference type="EC" id="1.1.1.25" evidence="1"/>
<dbReference type="EMBL" id="CP001661">
    <property type="protein sequence ID" value="ACT17685.1"/>
    <property type="molecule type" value="Genomic_DNA"/>
</dbReference>
<dbReference type="SMR" id="C6E5S6"/>
<dbReference type="STRING" id="443144.GM21_1630"/>
<dbReference type="KEGG" id="gem:GM21_1630"/>
<dbReference type="eggNOG" id="COG0169">
    <property type="taxonomic scope" value="Bacteria"/>
</dbReference>
<dbReference type="HOGENOM" id="CLU_044063_4_1_7"/>
<dbReference type="OrthoDB" id="9792692at2"/>
<dbReference type="UniPathway" id="UPA00053">
    <property type="reaction ID" value="UER00087"/>
</dbReference>
<dbReference type="GO" id="GO:0005829">
    <property type="term" value="C:cytosol"/>
    <property type="evidence" value="ECO:0007669"/>
    <property type="project" value="TreeGrafter"/>
</dbReference>
<dbReference type="GO" id="GO:0050661">
    <property type="term" value="F:NADP binding"/>
    <property type="evidence" value="ECO:0007669"/>
    <property type="project" value="InterPro"/>
</dbReference>
<dbReference type="GO" id="GO:0004764">
    <property type="term" value="F:shikimate 3-dehydrogenase (NADP+) activity"/>
    <property type="evidence" value="ECO:0007669"/>
    <property type="project" value="UniProtKB-UniRule"/>
</dbReference>
<dbReference type="GO" id="GO:0008652">
    <property type="term" value="P:amino acid biosynthetic process"/>
    <property type="evidence" value="ECO:0007669"/>
    <property type="project" value="UniProtKB-KW"/>
</dbReference>
<dbReference type="GO" id="GO:0009073">
    <property type="term" value="P:aromatic amino acid family biosynthetic process"/>
    <property type="evidence" value="ECO:0007669"/>
    <property type="project" value="UniProtKB-KW"/>
</dbReference>
<dbReference type="GO" id="GO:0009423">
    <property type="term" value="P:chorismate biosynthetic process"/>
    <property type="evidence" value="ECO:0007669"/>
    <property type="project" value="UniProtKB-UniRule"/>
</dbReference>
<dbReference type="GO" id="GO:0019632">
    <property type="term" value="P:shikimate metabolic process"/>
    <property type="evidence" value="ECO:0007669"/>
    <property type="project" value="InterPro"/>
</dbReference>
<dbReference type="CDD" id="cd01065">
    <property type="entry name" value="NAD_bind_Shikimate_DH"/>
    <property type="match status" value="1"/>
</dbReference>
<dbReference type="Gene3D" id="3.40.50.10860">
    <property type="entry name" value="Leucine Dehydrogenase, chain A, domain 1"/>
    <property type="match status" value="1"/>
</dbReference>
<dbReference type="Gene3D" id="3.40.50.720">
    <property type="entry name" value="NAD(P)-binding Rossmann-like Domain"/>
    <property type="match status" value="1"/>
</dbReference>
<dbReference type="HAMAP" id="MF_00222">
    <property type="entry name" value="Shikimate_DH_AroE"/>
    <property type="match status" value="1"/>
</dbReference>
<dbReference type="InterPro" id="IPR046346">
    <property type="entry name" value="Aminoacid_DH-like_N_sf"/>
</dbReference>
<dbReference type="InterPro" id="IPR036291">
    <property type="entry name" value="NAD(P)-bd_dom_sf"/>
</dbReference>
<dbReference type="InterPro" id="IPR041121">
    <property type="entry name" value="SDH_C"/>
</dbReference>
<dbReference type="InterPro" id="IPR011342">
    <property type="entry name" value="Shikimate_DH"/>
</dbReference>
<dbReference type="InterPro" id="IPR013708">
    <property type="entry name" value="Shikimate_DH-bd_N"/>
</dbReference>
<dbReference type="InterPro" id="IPR022893">
    <property type="entry name" value="Shikimate_DH_fam"/>
</dbReference>
<dbReference type="NCBIfam" id="TIGR00507">
    <property type="entry name" value="aroE"/>
    <property type="match status" value="1"/>
</dbReference>
<dbReference type="PANTHER" id="PTHR21089:SF1">
    <property type="entry name" value="BIFUNCTIONAL 3-DEHYDROQUINATE DEHYDRATASE_SHIKIMATE DEHYDROGENASE, CHLOROPLASTIC"/>
    <property type="match status" value="1"/>
</dbReference>
<dbReference type="PANTHER" id="PTHR21089">
    <property type="entry name" value="SHIKIMATE DEHYDROGENASE"/>
    <property type="match status" value="1"/>
</dbReference>
<dbReference type="Pfam" id="PF18317">
    <property type="entry name" value="SDH_C"/>
    <property type="match status" value="1"/>
</dbReference>
<dbReference type="Pfam" id="PF08501">
    <property type="entry name" value="Shikimate_dh_N"/>
    <property type="match status" value="1"/>
</dbReference>
<dbReference type="SUPFAM" id="SSF53223">
    <property type="entry name" value="Aminoacid dehydrogenase-like, N-terminal domain"/>
    <property type="match status" value="1"/>
</dbReference>
<dbReference type="SUPFAM" id="SSF51735">
    <property type="entry name" value="NAD(P)-binding Rossmann-fold domains"/>
    <property type="match status" value="1"/>
</dbReference>
<comment type="function">
    <text evidence="1">Involved in the biosynthesis of the chorismate, which leads to the biosynthesis of aromatic amino acids. Catalyzes the reversible NADPH linked reduction of 3-dehydroshikimate (DHSA) to yield shikimate (SA).</text>
</comment>
<comment type="catalytic activity">
    <reaction evidence="1">
        <text>shikimate + NADP(+) = 3-dehydroshikimate + NADPH + H(+)</text>
        <dbReference type="Rhea" id="RHEA:17737"/>
        <dbReference type="ChEBI" id="CHEBI:15378"/>
        <dbReference type="ChEBI" id="CHEBI:16630"/>
        <dbReference type="ChEBI" id="CHEBI:36208"/>
        <dbReference type="ChEBI" id="CHEBI:57783"/>
        <dbReference type="ChEBI" id="CHEBI:58349"/>
        <dbReference type="EC" id="1.1.1.25"/>
    </reaction>
</comment>
<comment type="pathway">
    <text evidence="1">Metabolic intermediate biosynthesis; chorismate biosynthesis; chorismate from D-erythrose 4-phosphate and phosphoenolpyruvate: step 4/7.</text>
</comment>
<comment type="subunit">
    <text evidence="1">Homodimer.</text>
</comment>
<comment type="similarity">
    <text evidence="1">Belongs to the shikimate dehydrogenase family.</text>
</comment>
<feature type="chain" id="PRO_1000204265" description="Shikimate dehydrogenase (NADP(+))">
    <location>
        <begin position="1"/>
        <end position="290"/>
    </location>
</feature>
<feature type="active site" description="Proton acceptor" evidence="1">
    <location>
        <position position="71"/>
    </location>
</feature>
<feature type="binding site" evidence="1">
    <location>
        <begin position="20"/>
        <end position="22"/>
    </location>
    <ligand>
        <name>shikimate</name>
        <dbReference type="ChEBI" id="CHEBI:36208"/>
    </ligand>
</feature>
<feature type="binding site" evidence="1">
    <location>
        <position position="67"/>
    </location>
    <ligand>
        <name>shikimate</name>
        <dbReference type="ChEBI" id="CHEBI:36208"/>
    </ligand>
</feature>
<feature type="binding site" evidence="1">
    <location>
        <position position="92"/>
    </location>
    <ligand>
        <name>shikimate</name>
        <dbReference type="ChEBI" id="CHEBI:36208"/>
    </ligand>
</feature>
<feature type="binding site" evidence="1">
    <location>
        <position position="107"/>
    </location>
    <ligand>
        <name>shikimate</name>
        <dbReference type="ChEBI" id="CHEBI:36208"/>
    </ligand>
</feature>
<feature type="binding site" evidence="1">
    <location>
        <begin position="132"/>
        <end position="136"/>
    </location>
    <ligand>
        <name>NADP(+)</name>
        <dbReference type="ChEBI" id="CHEBI:58349"/>
    </ligand>
</feature>
<feature type="binding site" evidence="1">
    <location>
        <position position="228"/>
    </location>
    <ligand>
        <name>NADP(+)</name>
        <dbReference type="ChEBI" id="CHEBI:58349"/>
    </ligand>
</feature>
<feature type="binding site" evidence="1">
    <location>
        <position position="230"/>
    </location>
    <ligand>
        <name>shikimate</name>
        <dbReference type="ChEBI" id="CHEBI:36208"/>
    </ligand>
</feature>
<feature type="binding site" evidence="1">
    <location>
        <position position="251"/>
    </location>
    <ligand>
        <name>NADP(+)</name>
        <dbReference type="ChEBI" id="CHEBI:58349"/>
    </ligand>
</feature>
<sequence length="290" mass="29336">MTITGKTRVTGIIGWPVAHSLSPPMHNAAFEALGLDFAYVPFPVAPERLAAGIAGLAALGVVGFSVTIPHKVAILPLLDRIAPEAELIGAVNTVAVKEGILTGYNTDGIGLLSALRSKLGFQPEGRSVLVLGAGGAARSAVASLGLAGAGRVEVANRSLDAGRGLAETMGERLPGTVFGFQPLGRVSDKGYLSGFDLVVNTTSVGMAGDGFAGLDLSALKRGASVYDMVYAPLVTPLLAQAEVVGVPSANGLGMLAAQGEAAFRIWTGAVPPEGCMEKALAARLATPGNP</sequence>
<name>AROE_GEOSM</name>
<accession>C6E5S6</accession>
<proteinExistence type="inferred from homology"/>